<reference key="1">
    <citation type="journal article" date="2005" name="Mol. Phylogenet. Evol.">
        <title>Multigene phylogeny of the Old World mice, Murinae, reveals distinct geographic lineages and the declining utility of mitochondrial genes compared to nuclear genes.</title>
        <authorList>
            <person name="Steppan S.J."/>
            <person name="Adkins R.M."/>
            <person name="Spinks P.Q."/>
            <person name="Hale C."/>
        </authorList>
    </citation>
    <scope>NUCLEOTIDE SEQUENCE [GENOMIC DNA]</scope>
</reference>
<gene>
    <name type="primary">MT-CO2</name>
    <name type="synonym">COII</name>
    <name type="synonym">COX2</name>
    <name type="synonym">COXII</name>
    <name type="synonym">MTCO2</name>
</gene>
<evidence type="ECO:0000250" key="1">
    <source>
        <dbReference type="UniProtKB" id="P00403"/>
    </source>
</evidence>
<evidence type="ECO:0000250" key="2">
    <source>
        <dbReference type="UniProtKB" id="P00410"/>
    </source>
</evidence>
<evidence type="ECO:0000250" key="3">
    <source>
        <dbReference type="UniProtKB" id="P68530"/>
    </source>
</evidence>
<evidence type="ECO:0000305" key="4"/>
<name>COX2_BERBO</name>
<comment type="function">
    <text evidence="2">Component of the cytochrome c oxidase, the last enzyme in the mitochondrial electron transport chain which drives oxidative phosphorylation. The respiratory chain contains 3 multisubunit complexes succinate dehydrogenase (complex II, CII), ubiquinol-cytochrome c oxidoreductase (cytochrome b-c1 complex, complex III, CIII) and cytochrome c oxidase (complex IV, CIV), that cooperate to transfer electrons derived from NADH and succinate to molecular oxygen, creating an electrochemical gradient over the inner membrane that drives transmembrane transport and the ATP synthase. Cytochrome c oxidase is the component of the respiratory chain that catalyzes the reduction of oxygen to water. Electrons originating from reduced cytochrome c in the intermembrane space (IMS) are transferred via the dinuclear copper A center (CU(A)) of subunit 2 and heme A of subunit 1 to the active site in subunit 1, a binuclear center (BNC) formed by heme A3 and copper B (CU(B)). The BNC reduces molecular oxygen to 2 water molecules using 4 electrons from cytochrome c in the IMS and 4 protons from the mitochondrial matrix.</text>
</comment>
<comment type="catalytic activity">
    <reaction evidence="2">
        <text>4 Fe(II)-[cytochrome c] + O2 + 8 H(+)(in) = 4 Fe(III)-[cytochrome c] + 2 H2O + 4 H(+)(out)</text>
        <dbReference type="Rhea" id="RHEA:11436"/>
        <dbReference type="Rhea" id="RHEA-COMP:10350"/>
        <dbReference type="Rhea" id="RHEA-COMP:14399"/>
        <dbReference type="ChEBI" id="CHEBI:15377"/>
        <dbReference type="ChEBI" id="CHEBI:15378"/>
        <dbReference type="ChEBI" id="CHEBI:15379"/>
        <dbReference type="ChEBI" id="CHEBI:29033"/>
        <dbReference type="ChEBI" id="CHEBI:29034"/>
        <dbReference type="EC" id="7.1.1.9"/>
    </reaction>
    <physiologicalReaction direction="left-to-right" evidence="2">
        <dbReference type="Rhea" id="RHEA:11437"/>
    </physiologicalReaction>
</comment>
<comment type="cofactor">
    <cofactor evidence="3">
        <name>Cu cation</name>
        <dbReference type="ChEBI" id="CHEBI:23378"/>
    </cofactor>
    <text evidence="3">Binds a dinuclear copper A center per subunit.</text>
</comment>
<comment type="subunit">
    <text evidence="1 3">Component of the cytochrome c oxidase (complex IV, CIV), a multisubunit enzyme composed of 14 subunits. The complex is composed of a catalytic core of 3 subunits MT-CO1, MT-CO2 and MT-CO3, encoded in the mitochondrial DNA, and 11 supernumerary subunits COX4I, COX5A, COX5B, COX6A, COX6B, COX6C, COX7A, COX7B, COX7C, COX8 and NDUFA4, which are encoded in the nuclear genome. The complex exists as a monomer or a dimer and forms supercomplexes (SCs) in the inner mitochondrial membrane with NADH-ubiquinone oxidoreductase (complex I, CI) and ubiquinol-cytochrome c oxidoreductase (cytochrome b-c1 complex, complex III, CIII), resulting in different assemblies (supercomplex SCI(1)III(2)IV(1) and megacomplex MCI(2)III(2)IV(2)) (By similarity). Found in a complex with TMEM177, COA6, COX18, COX20, SCO1 and SCO2. Interacts with TMEM177 in a COX20-dependent manner. Interacts with COX20. Interacts with COX16 (By similarity).</text>
</comment>
<comment type="subcellular location">
    <subcellularLocation>
        <location evidence="3">Mitochondrion inner membrane</location>
        <topology evidence="3">Multi-pass membrane protein</topology>
    </subcellularLocation>
</comment>
<comment type="similarity">
    <text evidence="4">Belongs to the cytochrome c oxidase subunit 2 family.</text>
</comment>
<protein>
    <recommendedName>
        <fullName>Cytochrome c oxidase subunit 2</fullName>
        <ecNumber>7.1.1.9</ecNumber>
    </recommendedName>
    <alternativeName>
        <fullName>Cytochrome c oxidase polypeptide II</fullName>
    </alternativeName>
</protein>
<proteinExistence type="inferred from homology"/>
<geneLocation type="mitochondrion"/>
<feature type="chain" id="PRO_0000254917" description="Cytochrome c oxidase subunit 2">
    <location>
        <begin position="1"/>
        <end position="227"/>
    </location>
</feature>
<feature type="topological domain" description="Mitochondrial intermembrane" evidence="3">
    <location>
        <begin position="1"/>
        <end position="14"/>
    </location>
</feature>
<feature type="transmembrane region" description="Helical; Name=I" evidence="3">
    <location>
        <begin position="15"/>
        <end position="45"/>
    </location>
</feature>
<feature type="topological domain" description="Mitochondrial matrix" evidence="3">
    <location>
        <begin position="46"/>
        <end position="59"/>
    </location>
</feature>
<feature type="transmembrane region" description="Helical; Name=II" evidence="3">
    <location>
        <begin position="60"/>
        <end position="87"/>
    </location>
</feature>
<feature type="topological domain" description="Mitochondrial intermembrane" evidence="3">
    <location>
        <begin position="88"/>
        <end position="227"/>
    </location>
</feature>
<feature type="binding site" evidence="3">
    <location>
        <position position="161"/>
    </location>
    <ligand>
        <name>Cu cation</name>
        <dbReference type="ChEBI" id="CHEBI:23378"/>
        <label>A1</label>
    </ligand>
</feature>
<feature type="binding site" evidence="3">
    <location>
        <position position="196"/>
    </location>
    <ligand>
        <name>Cu cation</name>
        <dbReference type="ChEBI" id="CHEBI:23378"/>
        <label>A1</label>
    </ligand>
</feature>
<feature type="binding site" evidence="3">
    <location>
        <position position="196"/>
    </location>
    <ligand>
        <name>Cu cation</name>
        <dbReference type="ChEBI" id="CHEBI:23378"/>
        <label>A2</label>
    </ligand>
</feature>
<feature type="binding site" evidence="3">
    <location>
        <position position="198"/>
    </location>
    <ligand>
        <name>Cu cation</name>
        <dbReference type="ChEBI" id="CHEBI:23378"/>
        <label>A2</label>
    </ligand>
</feature>
<feature type="binding site" evidence="3">
    <location>
        <position position="198"/>
    </location>
    <ligand>
        <name>Mg(2+)</name>
        <dbReference type="ChEBI" id="CHEBI:18420"/>
        <note>ligand shared with MT-CO1</note>
    </ligand>
</feature>
<feature type="binding site" evidence="3">
    <location>
        <position position="200"/>
    </location>
    <ligand>
        <name>Cu cation</name>
        <dbReference type="ChEBI" id="CHEBI:23378"/>
        <label>A1</label>
    </ligand>
</feature>
<feature type="binding site" evidence="3">
    <location>
        <position position="200"/>
    </location>
    <ligand>
        <name>Cu cation</name>
        <dbReference type="ChEBI" id="CHEBI:23378"/>
        <label>A2</label>
    </ligand>
</feature>
<feature type="binding site" evidence="3">
    <location>
        <position position="204"/>
    </location>
    <ligand>
        <name>Cu cation</name>
        <dbReference type="ChEBI" id="CHEBI:23378"/>
        <label>A2</label>
    </ligand>
</feature>
<feature type="binding site" evidence="3">
    <location>
        <position position="207"/>
    </location>
    <ligand>
        <name>Cu cation</name>
        <dbReference type="ChEBI" id="CHEBI:23378"/>
        <label>A1</label>
    </ligand>
</feature>
<keyword id="KW-0186">Copper</keyword>
<keyword id="KW-0249">Electron transport</keyword>
<keyword id="KW-0460">Magnesium</keyword>
<keyword id="KW-0472">Membrane</keyword>
<keyword id="KW-0479">Metal-binding</keyword>
<keyword id="KW-0496">Mitochondrion</keyword>
<keyword id="KW-0999">Mitochondrion inner membrane</keyword>
<keyword id="KW-0679">Respiratory chain</keyword>
<keyword id="KW-1278">Translocase</keyword>
<keyword id="KW-0812">Transmembrane</keyword>
<keyword id="KW-1133">Transmembrane helix</keyword>
<keyword id="KW-0813">Transport</keyword>
<accession>Q38S20</accession>
<dbReference type="EC" id="7.1.1.9"/>
<dbReference type="EMBL" id="DQ019096">
    <property type="protein sequence ID" value="ABA28380.1"/>
    <property type="molecule type" value="Genomic_DNA"/>
</dbReference>
<dbReference type="SMR" id="Q38S20"/>
<dbReference type="GO" id="GO:0005743">
    <property type="term" value="C:mitochondrial inner membrane"/>
    <property type="evidence" value="ECO:0007669"/>
    <property type="project" value="UniProtKB-SubCell"/>
</dbReference>
<dbReference type="GO" id="GO:0045277">
    <property type="term" value="C:respiratory chain complex IV"/>
    <property type="evidence" value="ECO:0000250"/>
    <property type="project" value="UniProtKB"/>
</dbReference>
<dbReference type="GO" id="GO:0005507">
    <property type="term" value="F:copper ion binding"/>
    <property type="evidence" value="ECO:0007669"/>
    <property type="project" value="InterPro"/>
</dbReference>
<dbReference type="GO" id="GO:0004129">
    <property type="term" value="F:cytochrome-c oxidase activity"/>
    <property type="evidence" value="ECO:0007669"/>
    <property type="project" value="UniProtKB-EC"/>
</dbReference>
<dbReference type="GO" id="GO:0042773">
    <property type="term" value="P:ATP synthesis coupled electron transport"/>
    <property type="evidence" value="ECO:0007669"/>
    <property type="project" value="TreeGrafter"/>
</dbReference>
<dbReference type="CDD" id="cd13912">
    <property type="entry name" value="CcO_II_C"/>
    <property type="match status" value="1"/>
</dbReference>
<dbReference type="FunFam" id="1.10.287.90:FF:000001">
    <property type="entry name" value="Cytochrome c oxidase subunit 2"/>
    <property type="match status" value="1"/>
</dbReference>
<dbReference type="FunFam" id="2.60.40.420:FF:000001">
    <property type="entry name" value="Cytochrome c oxidase subunit 2"/>
    <property type="match status" value="1"/>
</dbReference>
<dbReference type="Gene3D" id="1.10.287.90">
    <property type="match status" value="1"/>
</dbReference>
<dbReference type="Gene3D" id="2.60.40.420">
    <property type="entry name" value="Cupredoxins - blue copper proteins"/>
    <property type="match status" value="1"/>
</dbReference>
<dbReference type="InterPro" id="IPR045187">
    <property type="entry name" value="CcO_II"/>
</dbReference>
<dbReference type="InterPro" id="IPR002429">
    <property type="entry name" value="CcO_II-like_C"/>
</dbReference>
<dbReference type="InterPro" id="IPR034210">
    <property type="entry name" value="CcO_II_C"/>
</dbReference>
<dbReference type="InterPro" id="IPR001505">
    <property type="entry name" value="Copper_CuA"/>
</dbReference>
<dbReference type="InterPro" id="IPR008972">
    <property type="entry name" value="Cupredoxin"/>
</dbReference>
<dbReference type="InterPro" id="IPR014222">
    <property type="entry name" value="Cyt_c_oxidase_su2"/>
</dbReference>
<dbReference type="InterPro" id="IPR011759">
    <property type="entry name" value="Cyt_c_oxidase_su2_TM_dom"/>
</dbReference>
<dbReference type="InterPro" id="IPR036257">
    <property type="entry name" value="Cyt_c_oxidase_su2_TM_sf"/>
</dbReference>
<dbReference type="NCBIfam" id="TIGR02866">
    <property type="entry name" value="CoxB"/>
    <property type="match status" value="1"/>
</dbReference>
<dbReference type="PANTHER" id="PTHR22888:SF9">
    <property type="entry name" value="CYTOCHROME C OXIDASE SUBUNIT 2"/>
    <property type="match status" value="1"/>
</dbReference>
<dbReference type="PANTHER" id="PTHR22888">
    <property type="entry name" value="CYTOCHROME C OXIDASE, SUBUNIT II"/>
    <property type="match status" value="1"/>
</dbReference>
<dbReference type="Pfam" id="PF00116">
    <property type="entry name" value="COX2"/>
    <property type="match status" value="1"/>
</dbReference>
<dbReference type="Pfam" id="PF02790">
    <property type="entry name" value="COX2_TM"/>
    <property type="match status" value="1"/>
</dbReference>
<dbReference type="PRINTS" id="PR01166">
    <property type="entry name" value="CYCOXIDASEII"/>
</dbReference>
<dbReference type="SUPFAM" id="SSF49503">
    <property type="entry name" value="Cupredoxins"/>
    <property type="match status" value="1"/>
</dbReference>
<dbReference type="SUPFAM" id="SSF81464">
    <property type="entry name" value="Cytochrome c oxidase subunit II-like, transmembrane region"/>
    <property type="match status" value="1"/>
</dbReference>
<dbReference type="PROSITE" id="PS00078">
    <property type="entry name" value="COX2"/>
    <property type="match status" value="1"/>
</dbReference>
<dbReference type="PROSITE" id="PS50857">
    <property type="entry name" value="COX2_CUA"/>
    <property type="match status" value="1"/>
</dbReference>
<dbReference type="PROSITE" id="PS50999">
    <property type="entry name" value="COX2_TM"/>
    <property type="match status" value="1"/>
</dbReference>
<organism>
    <name type="scientific">Berylmys bowersi</name>
    <name type="common">Bower's white-toothed rat</name>
    <dbReference type="NCBI Taxonomy" id="83759"/>
    <lineage>
        <taxon>Eukaryota</taxon>
        <taxon>Metazoa</taxon>
        <taxon>Chordata</taxon>
        <taxon>Craniata</taxon>
        <taxon>Vertebrata</taxon>
        <taxon>Euteleostomi</taxon>
        <taxon>Mammalia</taxon>
        <taxon>Eutheria</taxon>
        <taxon>Euarchontoglires</taxon>
        <taxon>Glires</taxon>
        <taxon>Rodentia</taxon>
        <taxon>Myomorpha</taxon>
        <taxon>Muroidea</taxon>
        <taxon>Muridae</taxon>
        <taxon>Murinae</taxon>
        <taxon>Berylmys</taxon>
    </lineage>
</organism>
<sequence length="227" mass="25874">MAYPFQLGLQDATSPIMEELTNFHDHTLMIVFLISSLVLYIISLMLTTKLTHTSTMDAQEVETIWTILPAVILILIALPSLRILYMMDEINNPALTVKTMGHQWYWSYEYTDYEDLCFDSYMIPTNDLKPGELRLLEVDNRVVLPMELPIRMLISSEDVLHSWAVPSLGLKTDAIPGRLNQATVTSNRPGLFYGQCSEICGSNHSFMPIVLEMVPLKHFENWSASMI</sequence>